<reference key="1">
    <citation type="journal article" date="2003" name="Genes Genet. Syst.">
        <title>Divergence and heterogeneity of the histone gene repeating units in the Drosophila melanogaster species subgroup.</title>
        <authorList>
            <person name="Kakita M."/>
            <person name="Shimizu T."/>
            <person name="Emoto M."/>
            <person name="Nagai M."/>
            <person name="Takeguchi M."/>
            <person name="Hosono Y."/>
            <person name="Kume N."/>
            <person name="Ozawa T."/>
            <person name="Ueda M."/>
            <person name="Bhuiyan M.S."/>
            <person name="Matsuo Y."/>
        </authorList>
    </citation>
    <scope>NUCLEOTIDE SEQUENCE [GENOMIC DNA] (HIS4)</scope>
</reference>
<reference key="2">
    <citation type="journal article" date="2007" name="Nature">
        <title>Evolution of genes and genomes on the Drosophila phylogeny.</title>
        <authorList>
            <consortium name="Drosophila 12 genomes consortium"/>
        </authorList>
    </citation>
    <scope>NUCLEOTIDE SEQUENCE [LARGE SCALE GENOMIC DNA] (GM11149; GM11159; GM11162; GM11187; GM11683; GM11713; GM11715; GM11745; GM11749; GM11845; GM12950; GM13120; GM13125; GM13140; GM13168; GM13186; GM13190; GM13192; GM13525; GM13538; GM13562; GM13630; GM13631; GM14868; GM15136; GM15454; GM16107; GM16109; GM16164; GM16185; GM16230; GM16393; GM16879; GM16891; GM16925; GM17443; GM18806; GM18818; GM18833; GM19313; GM19317; GM19324; GM19326; GM19340; GM19352; GM19376; GM19601; GM19626; GM19645; GM19693; GM19694; GM19700; GM19704; GM19705; GM19735; GM19737; GM20007; GM22033; GM22670; GM24174; GM24351; GM26662; GM26664 AND GM26728)</scope>
    <source>
        <strain>Rob3c / Tucson 14021-0248.25</strain>
    </source>
</reference>
<organism>
    <name type="scientific">Drosophila sechellia</name>
    <name type="common">Fruit fly</name>
    <dbReference type="NCBI Taxonomy" id="7238"/>
    <lineage>
        <taxon>Eukaryota</taxon>
        <taxon>Metazoa</taxon>
        <taxon>Ecdysozoa</taxon>
        <taxon>Arthropoda</taxon>
        <taxon>Hexapoda</taxon>
        <taxon>Insecta</taxon>
        <taxon>Pterygota</taxon>
        <taxon>Neoptera</taxon>
        <taxon>Endopterygota</taxon>
        <taxon>Diptera</taxon>
        <taxon>Brachycera</taxon>
        <taxon>Muscomorpha</taxon>
        <taxon>Ephydroidea</taxon>
        <taxon>Drosophilidae</taxon>
        <taxon>Drosophila</taxon>
        <taxon>Sophophora</taxon>
    </lineage>
</organism>
<proteinExistence type="inferred from homology"/>
<sequence length="103" mass="11381">MTGRGKGGKGLGKGGAKRHRKVLRDNIQGITKPAIRRLARRGGVKRISGLIYEETRGVLKVFLENVIRDAVTYTEHAKRKTVTAMDVVYALKRQGRTLYGFGG</sequence>
<dbReference type="EMBL" id="AB105184">
    <property type="protein sequence ID" value="BAD02440.1"/>
    <property type="molecule type" value="Genomic_DNA"/>
</dbReference>
<dbReference type="EMBL" id="AB105185">
    <property type="protein sequence ID" value="BAD02444.1"/>
    <property type="molecule type" value="Genomic_DNA"/>
</dbReference>
<dbReference type="EMBL" id="CH480815">
    <property type="protein sequence ID" value="EDW42166.1"/>
    <property type="molecule type" value="Genomic_DNA"/>
</dbReference>
<dbReference type="EMBL" id="CH480906">
    <property type="protein sequence ID" value="EDW56415.1"/>
    <property type="molecule type" value="Genomic_DNA"/>
</dbReference>
<dbReference type="EMBL" id="CH480906">
    <property type="protein sequence ID" value="EDW56418.1"/>
    <property type="molecule type" value="Genomic_DNA"/>
</dbReference>
<dbReference type="EMBL" id="CH480906">
    <property type="protein sequence ID" value="EDW56428.1"/>
    <property type="molecule type" value="Genomic_DNA"/>
</dbReference>
<dbReference type="EMBL" id="CH480906">
    <property type="protein sequence ID" value="EDW56442.1"/>
    <property type="molecule type" value="Genomic_DNA"/>
</dbReference>
<dbReference type="EMBL" id="CH481029">
    <property type="protein sequence ID" value="EDW48891.1"/>
    <property type="molecule type" value="Genomic_DNA"/>
</dbReference>
<dbReference type="EMBL" id="CH481037">
    <property type="protein sequence ID" value="EDW49035.1"/>
    <property type="molecule type" value="Genomic_DNA"/>
</dbReference>
<dbReference type="EMBL" id="CH481037">
    <property type="protein sequence ID" value="EDW49040.1"/>
    <property type="molecule type" value="Genomic_DNA"/>
</dbReference>
<dbReference type="EMBL" id="CH481037">
    <property type="protein sequence ID" value="EDW49044.1"/>
    <property type="molecule type" value="Genomic_DNA"/>
</dbReference>
<dbReference type="EMBL" id="CH481158">
    <property type="protein sequence ID" value="EDW51457.1"/>
    <property type="molecule type" value="Genomic_DNA"/>
</dbReference>
<dbReference type="EMBL" id="CH481158">
    <property type="protein sequence ID" value="EDW51462.1"/>
    <property type="molecule type" value="Genomic_DNA"/>
</dbReference>
<dbReference type="EMBL" id="CH481183">
    <property type="protein sequence ID" value="EDW52636.1"/>
    <property type="molecule type" value="Genomic_DNA"/>
</dbReference>
<dbReference type="EMBL" id="CH481193">
    <property type="protein sequence ID" value="EDW52675.1"/>
    <property type="molecule type" value="Genomic_DNA"/>
</dbReference>
<dbReference type="EMBL" id="CH481254">
    <property type="protein sequence ID" value="EDW52839.1"/>
    <property type="molecule type" value="Genomic_DNA"/>
</dbReference>
<dbReference type="EMBL" id="CH481254">
    <property type="protein sequence ID" value="EDW52843.1"/>
    <property type="molecule type" value="Genomic_DNA"/>
</dbReference>
<dbReference type="EMBL" id="CH481291">
    <property type="protein sequence ID" value="EDW53730.1"/>
    <property type="molecule type" value="Genomic_DNA"/>
</dbReference>
<dbReference type="EMBL" id="CH481424">
    <property type="protein sequence ID" value="EDW55360.1"/>
    <property type="molecule type" value="Genomic_DNA"/>
</dbReference>
<dbReference type="EMBL" id="CH481534">
    <property type="protein sequence ID" value="EDW55917.1"/>
    <property type="molecule type" value="Genomic_DNA"/>
</dbReference>
<dbReference type="EMBL" id="CH676513">
    <property type="protein sequence ID" value="EDW53644.1"/>
    <property type="molecule type" value="Genomic_DNA"/>
</dbReference>
<dbReference type="EMBL" id="CH676513">
    <property type="protein sequence ID" value="EDW53649.1"/>
    <property type="molecule type" value="Genomic_DNA"/>
</dbReference>
<dbReference type="EMBL" id="CH676531">
    <property type="protein sequence ID" value="EDW53866.1"/>
    <property type="molecule type" value="Genomic_DNA"/>
</dbReference>
<dbReference type="EMBL" id="CH676597">
    <property type="protein sequence ID" value="EDW55859.1"/>
    <property type="molecule type" value="Genomic_DNA"/>
</dbReference>
<dbReference type="EMBL" id="CH676687">
    <property type="protein sequence ID" value="EDW43606.1"/>
    <property type="molecule type" value="Genomic_DNA"/>
</dbReference>
<dbReference type="EMBL" id="CH676687">
    <property type="protein sequence ID" value="EDW43610.1"/>
    <property type="molecule type" value="Genomic_DNA"/>
</dbReference>
<dbReference type="EMBL" id="CH677319">
    <property type="protein sequence ID" value="EDW48753.1"/>
    <property type="molecule type" value="Genomic_DNA"/>
</dbReference>
<dbReference type="EMBL" id="CH677970">
    <property type="protein sequence ID" value="EDW49763.1"/>
    <property type="molecule type" value="Genomic_DNA"/>
</dbReference>
<dbReference type="EMBL" id="CH678052">
    <property type="protein sequence ID" value="EDW50883.1"/>
    <property type="molecule type" value="Genomic_DNA"/>
</dbReference>
<dbReference type="EMBL" id="CH678148">
    <property type="protein sequence ID" value="EDW50947.1"/>
    <property type="molecule type" value="Genomic_DNA"/>
</dbReference>
<dbReference type="EMBL" id="CH678254">
    <property type="protein sequence ID" value="EDW51028.1"/>
    <property type="molecule type" value="Genomic_DNA"/>
</dbReference>
<dbReference type="EMBL" id="CH678310">
    <property type="protein sequence ID" value="EDW51099.1"/>
    <property type="molecule type" value="Genomic_DNA"/>
</dbReference>
<dbReference type="EMBL" id="CH678886">
    <property type="protein sequence ID" value="EDW51646.1"/>
    <property type="molecule type" value="Genomic_DNA"/>
</dbReference>
<dbReference type="EMBL" id="CH679257">
    <property type="protein sequence ID" value="EDW52709.1"/>
    <property type="molecule type" value="Genomic_DNA"/>
</dbReference>
<dbReference type="EMBL" id="CH679359">
    <property type="protein sequence ID" value="EDW52722.1"/>
    <property type="molecule type" value="Genomic_DNA"/>
</dbReference>
<dbReference type="EMBL" id="CH680125">
    <property type="protein sequence ID" value="EDW53700.1"/>
    <property type="molecule type" value="Genomic_DNA"/>
</dbReference>
<dbReference type="EMBL" id="CH681102">
    <property type="protein sequence ID" value="EDW54674.1"/>
    <property type="molecule type" value="Genomic_DNA"/>
</dbReference>
<dbReference type="EMBL" id="CH681475">
    <property type="protein sequence ID" value="EDW54713.1"/>
    <property type="molecule type" value="Genomic_DNA"/>
</dbReference>
<dbReference type="EMBL" id="CH681580">
    <property type="protein sequence ID" value="EDW54722.1"/>
    <property type="molecule type" value="Genomic_DNA"/>
</dbReference>
<dbReference type="EMBL" id="CH682391">
    <property type="protein sequence ID" value="EDW55400.1"/>
    <property type="molecule type" value="Genomic_DNA"/>
</dbReference>
<dbReference type="EMBL" id="CH682516">
    <property type="protein sequence ID" value="EDW55410.1"/>
    <property type="molecule type" value="Genomic_DNA"/>
</dbReference>
<dbReference type="EMBL" id="CH682536">
    <property type="protein sequence ID" value="EDW55412.1"/>
    <property type="molecule type" value="Genomic_DNA"/>
</dbReference>
<dbReference type="EMBL" id="CH682669">
    <property type="protein sequence ID" value="EDW55421.1"/>
    <property type="molecule type" value="Genomic_DNA"/>
</dbReference>
<dbReference type="EMBL" id="CH682862">
    <property type="protein sequence ID" value="EDW55455.1"/>
    <property type="molecule type" value="Genomic_DNA"/>
</dbReference>
<dbReference type="EMBL" id="CH682935">
    <property type="protein sequence ID" value="EDW55848.1"/>
    <property type="molecule type" value="Genomic_DNA"/>
</dbReference>
<dbReference type="EMBL" id="CH683582">
    <property type="protein sequence ID" value="EDW55906.1"/>
    <property type="molecule type" value="Genomic_DNA"/>
</dbReference>
<dbReference type="EMBL" id="CH683813">
    <property type="protein sequence ID" value="EDW55929.1"/>
    <property type="molecule type" value="Genomic_DNA"/>
</dbReference>
<dbReference type="EMBL" id="CH683819">
    <property type="protein sequence ID" value="EDW55930.1"/>
    <property type="molecule type" value="Genomic_DNA"/>
</dbReference>
<dbReference type="EMBL" id="CH684099">
    <property type="protein sequence ID" value="EDW56412.1"/>
    <property type="molecule type" value="Genomic_DNA"/>
</dbReference>
<dbReference type="EMBL" id="CH684155">
    <property type="protein sequence ID" value="EDW56447.1"/>
    <property type="molecule type" value="Genomic_DNA"/>
</dbReference>
<dbReference type="EMBL" id="CH684275">
    <property type="protein sequence ID" value="EDW56464.1"/>
    <property type="molecule type" value="Genomic_DNA"/>
</dbReference>
<dbReference type="EMBL" id="CH684297">
    <property type="protein sequence ID" value="EDW56468.1"/>
    <property type="molecule type" value="Genomic_DNA"/>
</dbReference>
<dbReference type="EMBL" id="CH684477">
    <property type="protein sequence ID" value="EDW56485.1"/>
    <property type="molecule type" value="Genomic_DNA"/>
</dbReference>
<dbReference type="EMBL" id="CH684629">
    <property type="protein sequence ID" value="EDW56501.1"/>
    <property type="molecule type" value="Genomic_DNA"/>
</dbReference>
<dbReference type="EMBL" id="CH684864">
    <property type="protein sequence ID" value="EDW56521.1"/>
    <property type="molecule type" value="Genomic_DNA"/>
</dbReference>
<dbReference type="EMBL" id="CH684964">
    <property type="protein sequence ID" value="EDW43588.1"/>
    <property type="molecule type" value="Genomic_DNA"/>
</dbReference>
<dbReference type="EMBL" id="CH685583">
    <property type="protein sequence ID" value="EDW43639.1"/>
    <property type="molecule type" value="Genomic_DNA"/>
</dbReference>
<dbReference type="EMBL" id="CH685829">
    <property type="protein sequence ID" value="EDW43662.1"/>
    <property type="molecule type" value="Genomic_DNA"/>
</dbReference>
<dbReference type="EMBL" id="CH686202">
    <property type="protein sequence ID" value="EDW44101.1"/>
    <property type="molecule type" value="Genomic_DNA"/>
</dbReference>
<dbReference type="EMBL" id="CH686871">
    <property type="protein sequence ID" value="EDW44150.1"/>
    <property type="molecule type" value="Genomic_DNA"/>
</dbReference>
<dbReference type="EMBL" id="CH687252">
    <property type="protein sequence ID" value="EDW44549.1"/>
    <property type="molecule type" value="Genomic_DNA"/>
</dbReference>
<dbReference type="EMBL" id="CH687676">
    <property type="protein sequence ID" value="EDW44583.1"/>
    <property type="molecule type" value="Genomic_DNA"/>
</dbReference>
<dbReference type="EMBL" id="CH688009">
    <property type="protein sequence ID" value="EDW44916.1"/>
    <property type="molecule type" value="Genomic_DNA"/>
</dbReference>
<dbReference type="EMBL" id="CH688133">
    <property type="protein sequence ID" value="EDW44927.1"/>
    <property type="molecule type" value="Genomic_DNA"/>
</dbReference>
<dbReference type="EMBL" id="CH688452">
    <property type="protein sequence ID" value="EDW44949.1"/>
    <property type="molecule type" value="Genomic_DNA"/>
</dbReference>
<dbReference type="EMBL" id="CH688634">
    <property type="protein sequence ID" value="EDW44969.1"/>
    <property type="molecule type" value="Genomic_DNA"/>
</dbReference>
<dbReference type="RefSeq" id="XP_002044742.1">
    <property type="nucleotide sequence ID" value="XM_002044706.1"/>
</dbReference>
<dbReference type="RefSeq" id="XP_002044745.1">
    <property type="nucleotide sequence ID" value="XM_002044709.1"/>
</dbReference>
<dbReference type="RefSeq" id="XP_002044755.1">
    <property type="nucleotide sequence ID" value="XM_002044719.1"/>
</dbReference>
<dbReference type="RefSeq" id="XP_002044769.1">
    <property type="nucleotide sequence ID" value="XM_002044733.1"/>
</dbReference>
<dbReference type="RefSeq" id="XP_002044951.1">
    <property type="nucleotide sequence ID" value="XM_002044915.1"/>
</dbReference>
<dbReference type="RefSeq" id="XP_002044954.1">
    <property type="nucleotide sequence ID" value="XM_002044918.1"/>
</dbReference>
<dbReference type="RefSeq" id="XP_002044959.1">
    <property type="nucleotide sequence ID" value="XM_002044923.1"/>
</dbReference>
<dbReference type="RefSeq" id="XP_002044963.1">
    <property type="nucleotide sequence ID" value="XM_002044927.1"/>
</dbReference>
<dbReference type="RefSeq" id="XP_002045028.1">
    <property type="nucleotide sequence ID" value="XM_002044992.1"/>
</dbReference>
<dbReference type="RefSeq" id="XP_002045033.1">
    <property type="nucleotide sequence ID" value="XM_002044997.1"/>
</dbReference>
<dbReference type="RefSeq" id="XP_002045050.1">
    <property type="nucleotide sequence ID" value="XM_002045014.1"/>
</dbReference>
<dbReference type="RefSeq" id="XP_002045059.1">
    <property type="nucleotide sequence ID" value="XM_002045023.1"/>
</dbReference>
<dbReference type="RefSeq" id="XP_002045091.1">
    <property type="nucleotide sequence ID" value="XM_002045055.1"/>
</dbReference>
<dbReference type="RefSeq" id="XP_002045095.1">
    <property type="nucleotide sequence ID" value="XM_002045059.1"/>
</dbReference>
<dbReference type="RefSeq" id="XP_002045108.1">
    <property type="nucleotide sequence ID" value="XM_002045072.1"/>
</dbReference>
<dbReference type="RefSeq" id="XP_002045140.1">
    <property type="nucleotide sequence ID" value="XM_002045104.1"/>
</dbReference>
<dbReference type="RefSeq" id="XP_002045157.1">
    <property type="nucleotide sequence ID" value="XM_002045121.1"/>
</dbReference>
<dbReference type="RefSeq" id="XP_002045355.1">
    <property type="nucleotide sequence ID" value="XM_002045319.1"/>
</dbReference>
<dbReference type="RefSeq" id="XP_002045360.1">
    <property type="nucleotide sequence ID" value="XM_002045324.1"/>
</dbReference>
<dbReference type="RefSeq" id="XP_002045367.1">
    <property type="nucleotide sequence ID" value="XM_002045331.1"/>
</dbReference>
<dbReference type="RefSeq" id="XP_002045391.1">
    <property type="nucleotide sequence ID" value="XM_002045355.1"/>
</dbReference>
<dbReference type="RefSeq" id="XP_002045406.1">
    <property type="nucleotide sequence ID" value="XM_002045370.1"/>
</dbReference>
<dbReference type="RefSeq" id="XP_002045410.1">
    <property type="nucleotide sequence ID" value="XM_002045374.1"/>
</dbReference>
<dbReference type="RefSeq" id="XP_002045458.1">
    <property type="nucleotide sequence ID" value="XM_002045422.1"/>
</dbReference>
<dbReference type="RefSeq" id="XP_002045487.1">
    <property type="nucleotide sequence ID" value="XM_002045451.1"/>
</dbReference>
<dbReference type="RefSeq" id="XP_002045493.1">
    <property type="nucleotide sequence ID" value="XM_002045457.1"/>
</dbReference>
<dbReference type="RefSeq" id="XP_002045501.1">
    <property type="nucleotide sequence ID" value="XM_002045465.1"/>
</dbReference>
<dbReference type="RefSeq" id="XP_002045515.1">
    <property type="nucleotide sequence ID" value="XM_002045479.1"/>
</dbReference>
<dbReference type="RefSeq" id="XP_002045521.1">
    <property type="nucleotide sequence ID" value="XM_002045485.1"/>
</dbReference>
<dbReference type="RefSeq" id="XP_002045549.1">
    <property type="nucleotide sequence ID" value="XM_002045513.1"/>
</dbReference>
<dbReference type="RefSeq" id="XP_002045562.1">
    <property type="nucleotide sequence ID" value="XM_002045526.1"/>
</dbReference>
<dbReference type="RefSeq" id="XP_002045567.1">
    <property type="nucleotide sequence ID" value="XM_002045531.1"/>
</dbReference>
<dbReference type="RefSeq" id="XP_002045594.1">
    <property type="nucleotide sequence ID" value="XM_002045558.1"/>
</dbReference>
<dbReference type="RefSeq" id="XP_002045640.1">
    <property type="nucleotide sequence ID" value="XM_002045604.1"/>
</dbReference>
<dbReference type="RefSeq" id="XP_002045655.1">
    <property type="nucleotide sequence ID" value="XM_002045619.1"/>
</dbReference>
<dbReference type="RefSeq" id="XP_002045661.1">
    <property type="nucleotide sequence ID" value="XM_002045625.1"/>
</dbReference>
<dbReference type="RefSeq" id="XP_002045684.1">
    <property type="nucleotide sequence ID" value="XM_002045648.1"/>
</dbReference>
<dbReference type="RefSeq" id="XP_002045688.1">
    <property type="nucleotide sequence ID" value="XM_002045652.1"/>
</dbReference>
<dbReference type="RefSeq" id="XP_002045690.1">
    <property type="nucleotide sequence ID" value="XM_002045654.1"/>
</dbReference>
<dbReference type="RefSeq" id="XP_002045698.1">
    <property type="nucleotide sequence ID" value="XM_002045662.1"/>
</dbReference>
<dbReference type="RefSeq" id="XP_002045710.1">
    <property type="nucleotide sequence ID" value="XM_002045674.1"/>
</dbReference>
<dbReference type="RefSeq" id="XP_002045716.1">
    <property type="nucleotide sequence ID" value="XM_002045680.1"/>
</dbReference>
<dbReference type="RefSeq" id="XP_002045751.1">
    <property type="nucleotide sequence ID" value="XM_002045715.1"/>
</dbReference>
<dbReference type="RefSeq" id="XP_002045763.1">
    <property type="nucleotide sequence ID" value="XM_002045727.1"/>
</dbReference>
<dbReference type="RefSeq" id="XP_002045764.1">
    <property type="nucleotide sequence ID" value="XM_002045728.1"/>
</dbReference>
<dbReference type="RefSeq" id="XP_002045780.1">
    <property type="nucleotide sequence ID" value="XM_002045744.1"/>
</dbReference>
<dbReference type="RefSeq" id="XP_002045783.1">
    <property type="nucleotide sequence ID" value="XM_002045747.1"/>
</dbReference>
<dbReference type="RefSeq" id="XP_002045798.1">
    <property type="nucleotide sequence ID" value="XM_002045762.1"/>
</dbReference>
<dbReference type="RefSeq" id="XP_002045802.1">
    <property type="nucleotide sequence ID" value="XM_002045766.1"/>
</dbReference>
<dbReference type="RefSeq" id="XP_002045810.1">
    <property type="nucleotide sequence ID" value="XM_002045774.1"/>
</dbReference>
<dbReference type="RefSeq" id="XP_002045822.1">
    <property type="nucleotide sequence ID" value="XM_002045786.1"/>
</dbReference>
<dbReference type="RefSeq" id="XP_002045834.1">
    <property type="nucleotide sequence ID" value="XM_002045798.1"/>
</dbReference>
<dbReference type="RefSeq" id="XP_002045836.1">
    <property type="nucleotide sequence ID" value="XM_002045800.1"/>
</dbReference>
<dbReference type="RefSeq" id="XP_002045864.1">
    <property type="nucleotide sequence ID" value="XM_002045828.1"/>
</dbReference>
<dbReference type="RefSeq" id="XP_002045880.1">
    <property type="nucleotide sequence ID" value="XM_002045844.1"/>
</dbReference>
<dbReference type="RefSeq" id="XP_002045896.1">
    <property type="nucleotide sequence ID" value="XM_002045860.1"/>
</dbReference>
<dbReference type="RefSeq" id="XP_002045928.1">
    <property type="nucleotide sequence ID" value="XM_002045892.1"/>
</dbReference>
<dbReference type="RefSeq" id="XP_002045938.1">
    <property type="nucleotide sequence ID" value="XM_002045902.1"/>
</dbReference>
<dbReference type="RefSeq" id="XP_002045957.1">
    <property type="nucleotide sequence ID" value="XM_002045921.1"/>
</dbReference>
<dbReference type="RefSeq" id="XP_002045976.1">
    <property type="nucleotide sequence ID" value="XM_002045940.1"/>
</dbReference>
<dbReference type="RefSeq" id="XP_002045986.1">
    <property type="nucleotide sequence ID" value="XM_002045950.1"/>
</dbReference>
<dbReference type="RefSeq" id="XP_002046001.1">
    <property type="nucleotide sequence ID" value="XM_002045965.1"/>
</dbReference>
<dbReference type="RefSeq" id="XP_002046011.1">
    <property type="nucleotide sequence ID" value="XM_002045975.1"/>
</dbReference>
<dbReference type="SMR" id="Q76FD9"/>
<dbReference type="STRING" id="7238.Q76FD9"/>
<dbReference type="EnsemblMetazoa" id="FBtr0194134">
    <property type="protein sequence ID" value="FBpp0192626"/>
    <property type="gene ID" value="FBgn0166094"/>
</dbReference>
<dbReference type="EnsemblMetazoa" id="FBtr0194144">
    <property type="protein sequence ID" value="FBpp0192636"/>
    <property type="gene ID" value="FBgn0166104"/>
</dbReference>
<dbReference type="EnsemblMetazoa" id="FBtr0194147">
    <property type="protein sequence ID" value="FBpp0192639"/>
    <property type="gene ID" value="FBgn0166107"/>
</dbReference>
<dbReference type="EnsemblMetazoa" id="FBtr0194172">
    <property type="protein sequence ID" value="FBpp0192664"/>
    <property type="gene ID" value="FBgn0166132"/>
</dbReference>
<dbReference type="EnsemblMetazoa" id="FBtr0194668">
    <property type="protein sequence ID" value="FBpp0193160"/>
    <property type="gene ID" value="FBgn0166626"/>
</dbReference>
<dbReference type="EnsemblMetazoa" id="FBtr0194698">
    <property type="protein sequence ID" value="FBpp0193190"/>
    <property type="gene ID" value="FBgn0166656"/>
</dbReference>
<dbReference type="EnsemblMetazoa" id="FBtr0194700">
    <property type="protein sequence ID" value="FBpp0193192"/>
    <property type="gene ID" value="FBgn0166658"/>
</dbReference>
<dbReference type="EnsemblMetazoa" id="FBtr0194730">
    <property type="protein sequence ID" value="FBpp0193222"/>
    <property type="gene ID" value="FBgn0166688"/>
</dbReference>
<dbReference type="EnsemblMetazoa" id="FBtr0194734">
    <property type="protein sequence ID" value="FBpp0193226"/>
    <property type="gene ID" value="FBgn0166692"/>
</dbReference>
<dbReference type="EnsemblMetazoa" id="FBtr0194830">
    <property type="protein sequence ID" value="FBpp0193322"/>
    <property type="gene ID" value="FBgn0166786"/>
</dbReference>
<dbReference type="EnsemblMetazoa" id="FBtr0195935">
    <property type="protein sequence ID" value="FBpp0194427"/>
    <property type="gene ID" value="FBgn0167882"/>
</dbReference>
<dbReference type="EnsemblMetazoa" id="FBtr0196105">
    <property type="protein sequence ID" value="FBpp0194597"/>
    <property type="gene ID" value="FBgn0168051"/>
</dbReference>
<dbReference type="EnsemblMetazoa" id="FBtr0196110">
    <property type="protein sequence ID" value="FBpp0194602"/>
    <property type="gene ID" value="FBgn0168056"/>
</dbReference>
<dbReference type="EnsemblMetazoa" id="FBtr0196125">
    <property type="protein sequence ID" value="FBpp0194617"/>
    <property type="gene ID" value="FBgn0168071"/>
</dbReference>
<dbReference type="EnsemblMetazoa" id="FBtr0196153">
    <property type="protein sequence ID" value="FBpp0194645"/>
    <property type="gene ID" value="FBgn0168099"/>
</dbReference>
<dbReference type="EnsemblMetazoa" id="FBtr0196171">
    <property type="protein sequence ID" value="FBpp0194663"/>
    <property type="gene ID" value="FBgn0168117"/>
</dbReference>
<dbReference type="EnsemblMetazoa" id="FBtr0196175">
    <property type="protein sequence ID" value="FBpp0194667"/>
    <property type="gene ID" value="FBgn0168121"/>
</dbReference>
<dbReference type="EnsemblMetazoa" id="FBtr0196177">
    <property type="protein sequence ID" value="FBpp0194669"/>
    <property type="gene ID" value="FBgn0168123"/>
</dbReference>
<dbReference type="EnsemblMetazoa" id="FBtr0196510">
    <property type="protein sequence ID" value="FBpp0195002"/>
    <property type="gene ID" value="FBgn0168456"/>
</dbReference>
<dbReference type="EnsemblMetazoa" id="FBtr0196523">
    <property type="protein sequence ID" value="FBpp0195015"/>
    <property type="gene ID" value="FBgn0168469"/>
</dbReference>
<dbReference type="EnsemblMetazoa" id="FBtr0196547">
    <property type="protein sequence ID" value="FBpp0195039"/>
    <property type="gene ID" value="FBgn0168493"/>
</dbReference>
<dbReference type="EnsemblMetazoa" id="FBtr0196615">
    <property type="protein sequence ID" value="FBpp0195107"/>
    <property type="gene ID" value="FBgn0168561"/>
</dbReference>
<dbReference type="EnsemblMetazoa" id="FBtr0196616">
    <property type="protein sequence ID" value="FBpp0195108"/>
    <property type="gene ID" value="FBgn0168562"/>
</dbReference>
<dbReference type="EnsemblMetazoa" id="FBtr0197853">
    <property type="protein sequence ID" value="FBpp0196345"/>
    <property type="gene ID" value="FBgn0169789"/>
</dbReference>
<dbReference type="EnsemblMetazoa" id="FBtr0198121">
    <property type="protein sequence ID" value="FBpp0196613"/>
    <property type="gene ID" value="FBgn0170056"/>
</dbReference>
<dbReference type="EnsemblMetazoa" id="FBtr0198439">
    <property type="protein sequence ID" value="FBpp0196931"/>
    <property type="gene ID" value="FBgn0170372"/>
</dbReference>
<dbReference type="EnsemblMetazoa" id="FBtr0199092">
    <property type="protein sequence ID" value="FBpp0197584"/>
    <property type="gene ID" value="FBgn0171023"/>
</dbReference>
<dbReference type="EnsemblMetazoa" id="FBtr0199094">
    <property type="protein sequence ID" value="FBpp0197586"/>
    <property type="gene ID" value="FBgn0171025"/>
</dbReference>
<dbReference type="EnsemblMetazoa" id="FBtr0199149">
    <property type="protein sequence ID" value="FBpp0197641"/>
    <property type="gene ID" value="FBgn0171080"/>
</dbReference>
<dbReference type="EnsemblMetazoa" id="FBtr0199170">
    <property type="protein sequence ID" value="FBpp0197662"/>
    <property type="gene ID" value="FBgn0171101"/>
</dbReference>
<dbReference type="EnsemblMetazoa" id="FBtr0199215">
    <property type="protein sequence ID" value="FBpp0197707"/>
    <property type="gene ID" value="FBgn0171146"/>
</dbReference>
<dbReference type="EnsemblMetazoa" id="FBtr0199378">
    <property type="protein sequence ID" value="FBpp0197870"/>
    <property type="gene ID" value="FBgn0171308"/>
</dbReference>
<dbReference type="EnsemblMetazoa" id="FBtr0199864">
    <property type="protein sequence ID" value="FBpp0198356"/>
    <property type="gene ID" value="FBgn0171792"/>
</dbReference>
<dbReference type="EnsemblMetazoa" id="FBtr0199876">
    <property type="protein sequence ID" value="FBpp0198368"/>
    <property type="gene ID" value="FBgn0171804"/>
</dbReference>
<dbReference type="EnsemblMetazoa" id="FBtr0199910">
    <property type="protein sequence ID" value="FBpp0198402"/>
    <property type="gene ID" value="FBgn0171838"/>
</dbReference>
<dbReference type="EnsemblMetazoa" id="FBtr0200428">
    <property type="protein sequence ID" value="FBpp0198920"/>
    <property type="gene ID" value="FBgn0172353"/>
</dbReference>
<dbReference type="EnsemblMetazoa" id="FBtr0201791">
    <property type="protein sequence ID" value="FBpp0200283"/>
    <property type="gene ID" value="FBgn0173711"/>
</dbReference>
<dbReference type="EnsemblMetazoa" id="FBtr0201803">
    <property type="protein sequence ID" value="FBpp0200295"/>
    <property type="gene ID" value="FBgn0173723"/>
</dbReference>
<dbReference type="EnsemblMetazoa" id="FBtr0201818">
    <property type="protein sequence ID" value="FBpp0200310"/>
    <property type="gene ID" value="FBgn0173738"/>
</dbReference>
<dbReference type="EnsemblMetazoa" id="FBtr0202298">
    <property type="protein sequence ID" value="FBpp0200790"/>
    <property type="gene ID" value="FBgn0174213"/>
</dbReference>
<dbReference type="EnsemblMetazoa" id="FBtr0202302">
    <property type="protein sequence ID" value="FBpp0200794"/>
    <property type="gene ID" value="FBgn0174217"/>
</dbReference>
<dbReference type="EnsemblMetazoa" id="FBtr0202309">
    <property type="protein sequence ID" value="FBpp0200801"/>
    <property type="gene ID" value="FBgn0174224"/>
</dbReference>
<dbReference type="EnsemblMetazoa" id="FBtr0202311">
    <property type="protein sequence ID" value="FBpp0200803"/>
    <property type="gene ID" value="FBgn0174226"/>
</dbReference>
<dbReference type="EnsemblMetazoa" id="FBtr0202325">
    <property type="protein sequence ID" value="FBpp0200817"/>
    <property type="gene ID" value="FBgn0174240"/>
</dbReference>
<dbReference type="EnsemblMetazoa" id="FBtr0202337">
    <property type="protein sequence ID" value="FBpp0200829"/>
    <property type="gene ID" value="FBgn0174252"/>
</dbReference>
<dbReference type="EnsemblMetazoa" id="FBtr0202361">
    <property type="protein sequence ID" value="FBpp0200853"/>
    <property type="gene ID" value="FBgn0174276"/>
</dbReference>
<dbReference type="EnsemblMetazoa" id="FBtr0202586">
    <property type="protein sequence ID" value="FBpp0201078"/>
    <property type="gene ID" value="FBgn0174501"/>
</dbReference>
<dbReference type="EnsemblMetazoa" id="FBtr0202611">
    <property type="protein sequence ID" value="FBpp0201103"/>
    <property type="gene ID" value="FBgn0174526"/>
</dbReference>
<dbReference type="EnsemblMetazoa" id="FBtr0202630">
    <property type="protein sequence ID" value="FBpp0201122"/>
    <property type="gene ID" value="FBgn0174545"/>
</dbReference>
<dbReference type="EnsemblMetazoa" id="FBtr0202678">
    <property type="protein sequence ID" value="FBpp0201170"/>
    <property type="gene ID" value="FBgn0174593"/>
</dbReference>
<dbReference type="EnsemblMetazoa" id="FBtr0202679">
    <property type="protein sequence ID" value="FBpp0201171"/>
    <property type="gene ID" value="FBgn0174594"/>
</dbReference>
<dbReference type="EnsemblMetazoa" id="FBtr0202685">
    <property type="protein sequence ID" value="FBpp0201177"/>
    <property type="gene ID" value="FBgn0174600"/>
</dbReference>
<dbReference type="EnsemblMetazoa" id="FBtr0202689">
    <property type="protein sequence ID" value="FBpp0201181"/>
    <property type="gene ID" value="FBgn0174604"/>
</dbReference>
<dbReference type="EnsemblMetazoa" id="FBtr0202690">
    <property type="protein sequence ID" value="FBpp0201182"/>
    <property type="gene ID" value="FBgn0174605"/>
</dbReference>
<dbReference type="EnsemblMetazoa" id="FBtr0202720">
    <property type="protein sequence ID" value="FBpp0201212"/>
    <property type="gene ID" value="FBgn0174635"/>
</dbReference>
<dbReference type="EnsemblMetazoa" id="FBtr0202722">
    <property type="protein sequence ID" value="FBpp0201214"/>
    <property type="gene ID" value="FBgn0174637"/>
</dbReference>
<dbReference type="EnsemblMetazoa" id="FBtr0202992">
    <property type="protein sequence ID" value="FBpp0201484"/>
    <property type="gene ID" value="FBgn0174892"/>
</dbReference>
<dbReference type="EnsemblMetazoa" id="FBtr0205018">
    <property type="protein sequence ID" value="FBpp0203510"/>
    <property type="gene ID" value="FBgn0176904"/>
</dbReference>
<dbReference type="EnsemblMetazoa" id="FBtr0205655">
    <property type="protein sequence ID" value="FBpp0204147"/>
    <property type="gene ID" value="FBgn0177540"/>
</dbReference>
<dbReference type="EnsemblMetazoa" id="FBtr0207159">
    <property type="protein sequence ID" value="FBpp0205651"/>
    <property type="gene ID" value="FBgn0179038"/>
</dbReference>
<dbReference type="EnsemblMetazoa" id="FBtr0207336">
    <property type="protein sequence ID" value="FBpp0205828"/>
    <property type="gene ID" value="FBgn0179215"/>
</dbReference>
<dbReference type="EnsemblMetazoa" id="FBtr0209647">
    <property type="protein sequence ID" value="FBpp0208139"/>
    <property type="gene ID" value="FBgn0181515"/>
</dbReference>
<dbReference type="EnsemblMetazoa" id="FBtr0209649">
    <property type="protein sequence ID" value="FBpp0208141"/>
    <property type="gene ID" value="FBgn0181517"/>
</dbReference>
<dbReference type="EnsemblMetazoa" id="FBtr0209713">
    <property type="protein sequence ID" value="FBpp0208205"/>
    <property type="gene ID" value="FBgn0181581"/>
</dbReference>
<dbReference type="EnsemblMetazoa" id="XM_002031144.2">
    <property type="protein sequence ID" value="XP_002031180.1"/>
    <property type="gene ID" value="LOC6606375"/>
</dbReference>
<dbReference type="EnsemblMetazoa" id="XM_032723420.1">
    <property type="protein sequence ID" value="XP_032579311.1"/>
    <property type="gene ID" value="LOC6606375"/>
</dbReference>
<dbReference type="GeneID" id="6606375"/>
<dbReference type="KEGG" id="dse:6606375"/>
<dbReference type="CTD" id="41773"/>
<dbReference type="HOGENOM" id="CLU_109117_2_3_1"/>
<dbReference type="OMA" id="QKEHING"/>
<dbReference type="OrthoDB" id="46600at7215"/>
<dbReference type="PhylomeDB" id="Q76FD9"/>
<dbReference type="Proteomes" id="UP000001292">
    <property type="component" value="Unassembled WGS sequence"/>
</dbReference>
<dbReference type="GO" id="GO:0000786">
    <property type="term" value="C:nucleosome"/>
    <property type="evidence" value="ECO:0000250"/>
    <property type="project" value="UniProtKB"/>
</dbReference>
<dbReference type="GO" id="GO:0005634">
    <property type="term" value="C:nucleus"/>
    <property type="evidence" value="ECO:0007669"/>
    <property type="project" value="UniProtKB-SubCell"/>
</dbReference>
<dbReference type="GO" id="GO:0003677">
    <property type="term" value="F:DNA binding"/>
    <property type="evidence" value="ECO:0000250"/>
    <property type="project" value="UniProtKB"/>
</dbReference>
<dbReference type="GO" id="GO:0046982">
    <property type="term" value="F:protein heterodimerization activity"/>
    <property type="evidence" value="ECO:0007669"/>
    <property type="project" value="InterPro"/>
</dbReference>
<dbReference type="GO" id="GO:0030527">
    <property type="term" value="F:structural constituent of chromatin"/>
    <property type="evidence" value="ECO:0007669"/>
    <property type="project" value="InterPro"/>
</dbReference>
<dbReference type="GO" id="GO:0006334">
    <property type="term" value="P:nucleosome assembly"/>
    <property type="evidence" value="ECO:0000250"/>
    <property type="project" value="UniProtKB"/>
</dbReference>
<dbReference type="CDD" id="cd22912">
    <property type="entry name" value="HFD_H4"/>
    <property type="match status" value="1"/>
</dbReference>
<dbReference type="FunFam" id="1.10.20.10:FF:000002">
    <property type="entry name" value="Histone H4"/>
    <property type="match status" value="1"/>
</dbReference>
<dbReference type="Gene3D" id="1.10.20.10">
    <property type="entry name" value="Histone, subunit A"/>
    <property type="match status" value="1"/>
</dbReference>
<dbReference type="InterPro" id="IPR035425">
    <property type="entry name" value="CENP-T/H4_C"/>
</dbReference>
<dbReference type="InterPro" id="IPR009072">
    <property type="entry name" value="Histone-fold"/>
</dbReference>
<dbReference type="InterPro" id="IPR001951">
    <property type="entry name" value="Histone_H4"/>
</dbReference>
<dbReference type="InterPro" id="IPR019809">
    <property type="entry name" value="Histone_H4_CS"/>
</dbReference>
<dbReference type="InterPro" id="IPR004823">
    <property type="entry name" value="TAF_TATA-bd_Histone-like_dom"/>
</dbReference>
<dbReference type="PANTHER" id="PTHR10484">
    <property type="entry name" value="HISTONE H4"/>
    <property type="match status" value="1"/>
</dbReference>
<dbReference type="Pfam" id="PF15511">
    <property type="entry name" value="CENP-T_C"/>
    <property type="match status" value="1"/>
</dbReference>
<dbReference type="PRINTS" id="PR00623">
    <property type="entry name" value="HISTONEH4"/>
</dbReference>
<dbReference type="SMART" id="SM00417">
    <property type="entry name" value="H4"/>
    <property type="match status" value="1"/>
</dbReference>
<dbReference type="SMART" id="SM00803">
    <property type="entry name" value="TAF"/>
    <property type="match status" value="1"/>
</dbReference>
<dbReference type="SUPFAM" id="SSF47113">
    <property type="entry name" value="Histone-fold"/>
    <property type="match status" value="1"/>
</dbReference>
<dbReference type="PROSITE" id="PS00047">
    <property type="entry name" value="HISTONE_H4"/>
    <property type="match status" value="1"/>
</dbReference>
<evidence type="ECO:0000250" key="1"/>
<evidence type="ECO:0000250" key="2">
    <source>
        <dbReference type="UniProtKB" id="P62805"/>
    </source>
</evidence>
<evidence type="ECO:0000250" key="3">
    <source>
        <dbReference type="UniProtKB" id="P84040"/>
    </source>
</evidence>
<evidence type="ECO:0000256" key="4">
    <source>
        <dbReference type="SAM" id="MobiDB-lite"/>
    </source>
</evidence>
<evidence type="ECO:0000305" key="5"/>
<name>H4_DROSE</name>
<gene>
    <name type="primary">His4</name>
    <name type="synonym">H4</name>
</gene>
<gene>
    <name type="ORF">GM11149</name>
</gene>
<gene>
    <name type="ORF">GM11159</name>
</gene>
<gene>
    <name type="ORF">GM11162</name>
</gene>
<gene>
    <name type="ORF">GM11187</name>
</gene>
<gene>
    <name type="ORF">GM11683</name>
</gene>
<gene>
    <name type="ORF">GM11713</name>
</gene>
<gene>
    <name type="ORF">GM11715</name>
</gene>
<gene>
    <name type="ORF">GM11745</name>
</gene>
<gene>
    <name type="ORF">GM11749</name>
</gene>
<gene>
    <name type="ORF">GM11845</name>
</gene>
<gene>
    <name type="ORF">GM12950</name>
</gene>
<gene>
    <name type="ORF">GM13120</name>
</gene>
<gene>
    <name type="ORF">GM13125</name>
</gene>
<gene>
    <name type="ORF">GM13140</name>
</gene>
<gene>
    <name type="ORF">GM13168</name>
</gene>
<gene>
    <name type="ORF">GM13186</name>
</gene>
<gene>
    <name type="ORF">GM13190</name>
</gene>
<gene>
    <name type="ORF">GM13192</name>
</gene>
<gene>
    <name type="ORF">GM13525</name>
</gene>
<gene>
    <name type="ORF">GM13538</name>
</gene>
<gene>
    <name type="ORF">GM13562</name>
</gene>
<gene>
    <name type="ORF">GM13630</name>
</gene>
<gene>
    <name type="ORF">GM13631</name>
</gene>
<gene>
    <name type="ORF">GM14868</name>
</gene>
<gene>
    <name type="ORF">GM15136</name>
</gene>
<gene>
    <name type="ORF">GM15454</name>
</gene>
<gene>
    <name type="ORF">GM16107</name>
</gene>
<gene>
    <name type="ORF">GM16109</name>
</gene>
<gene>
    <name type="ORF">GM16164</name>
</gene>
<gene>
    <name type="ORF">GM16185</name>
</gene>
<gene>
    <name type="ORF">GM16230</name>
</gene>
<gene>
    <name type="ORF">GM16393</name>
</gene>
<gene>
    <name type="ORF">GM16879</name>
</gene>
<gene>
    <name type="ORF">GM16891</name>
</gene>
<gene>
    <name type="ORF">GM16925</name>
</gene>
<gene>
    <name type="ORF">GM17443</name>
</gene>
<gene>
    <name type="ORF">GM18806</name>
</gene>
<gene>
    <name type="ORF">GM18818</name>
</gene>
<gene>
    <name type="ORF">GM18833</name>
</gene>
<gene>
    <name type="ORF">GM19313</name>
</gene>
<gene>
    <name type="ORF">GM19317</name>
</gene>
<gene>
    <name type="ORF">GM19324</name>
</gene>
<gene>
    <name type="ORF">GM19326</name>
</gene>
<gene>
    <name type="ORF">GM19340</name>
</gene>
<gene>
    <name type="ORF">GM19352</name>
</gene>
<gene>
    <name type="ORF">GM19376</name>
</gene>
<gene>
    <name type="ORF">GM19601</name>
</gene>
<gene>
    <name type="ORF">GM19626</name>
</gene>
<gene>
    <name type="ORF">GM19645</name>
</gene>
<gene>
    <name type="ORF">GM19693</name>
</gene>
<gene>
    <name type="ORF">GM19694</name>
</gene>
<gene>
    <name type="ORF">GM19700</name>
</gene>
<gene>
    <name type="ORF">GM19704</name>
</gene>
<gene>
    <name type="ORF">GM19705</name>
</gene>
<gene>
    <name type="ORF">GM19735</name>
</gene>
<gene>
    <name type="ORF">GM19737</name>
</gene>
<gene>
    <name type="ORF">GM20007</name>
</gene>
<gene>
    <name type="ORF">GM22033</name>
</gene>
<gene>
    <name type="ORF">GM22670</name>
</gene>
<gene>
    <name type="ORF">GM24174</name>
</gene>
<gene>
    <name type="ORF">GM24351</name>
</gene>
<gene>
    <name type="ORF">GM26662</name>
</gene>
<gene>
    <name type="ORF">GM26664</name>
</gene>
<gene>
    <name type="ORF">GM26728</name>
</gene>
<feature type="initiator methionine" description="Removed" evidence="1">
    <location>
        <position position="1"/>
    </location>
</feature>
<feature type="chain" id="PRO_0000158307" description="Histone H4">
    <location>
        <begin position="2"/>
        <end position="103"/>
    </location>
</feature>
<feature type="DNA-binding region">
    <location>
        <begin position="17"/>
        <end position="21"/>
    </location>
</feature>
<feature type="region of interest" description="Disordered" evidence="4">
    <location>
        <begin position="1"/>
        <end position="20"/>
    </location>
</feature>
<feature type="compositionally biased region" description="Gly residues" evidence="4">
    <location>
        <begin position="1"/>
        <end position="14"/>
    </location>
</feature>
<feature type="modified residue" description="N6-acetyl-N6-methyllysine; alternate" evidence="2">
    <location>
        <position position="6"/>
    </location>
</feature>
<feature type="modified residue" description="N6-acetyllysine" evidence="3">
    <location>
        <position position="6"/>
    </location>
</feature>
<feature type="modified residue" description="N6-acetyl-N6-methyllysine; alternate" evidence="2">
    <location>
        <position position="13"/>
    </location>
</feature>
<feature type="modified residue" description="N6-acetyllysine" evidence="3">
    <location>
        <position position="13"/>
    </location>
</feature>
<feature type="modified residue" description="N6-succinyllysine" evidence="3">
    <location>
        <position position="32"/>
    </location>
</feature>
<feature type="modified residue" description="N6-succinyllysine" evidence="3">
    <location>
        <position position="78"/>
    </location>
</feature>
<feature type="modified residue" description="N6-succinyllysine" evidence="3">
    <location>
        <position position="80"/>
    </location>
</feature>
<feature type="modified residue" description="Phosphothreonine" evidence="3">
    <location>
        <position position="81"/>
    </location>
</feature>
<feature type="modified residue" description="Phosphothreonine" evidence="3">
    <location>
        <position position="83"/>
    </location>
</feature>
<feature type="modified residue" description="N6-succinyllysine" evidence="3">
    <location>
        <position position="92"/>
    </location>
</feature>
<protein>
    <recommendedName>
        <fullName>Histone H4</fullName>
    </recommendedName>
</protein>
<keyword id="KW-0007">Acetylation</keyword>
<keyword id="KW-0158">Chromosome</keyword>
<keyword id="KW-0238">DNA-binding</keyword>
<keyword id="KW-0488">Methylation</keyword>
<keyword id="KW-0544">Nucleosome core</keyword>
<keyword id="KW-0539">Nucleus</keyword>
<keyword id="KW-0597">Phosphoprotein</keyword>
<keyword id="KW-1185">Reference proteome</keyword>
<comment type="function">
    <text>Core component of nucleosome. Nucleosomes wrap and compact DNA into chromatin, limiting DNA accessibility to the cellular machineries which require DNA as a template. Histones thereby play a central role in transcription regulation, DNA repair, DNA replication and chromosomal stability. DNA accessibility is regulated via a complex set of post-translational modifications of histones, also called histone code, and nucleosome remodeling.</text>
</comment>
<comment type="subunit">
    <text>The nucleosome is a histone octamer containing two molecules each of H2A, H2B, H3 and H4 assembled in one H3-H4 heterotetramer and two H2A-H2B heterodimers. The octamer wraps approximately 147 bp of DNA.</text>
</comment>
<comment type="subcellular location">
    <subcellularLocation>
        <location evidence="1">Nucleus</location>
    </subcellularLocation>
    <subcellularLocation>
        <location evidence="1">Chromosome</location>
    </subcellularLocation>
</comment>
<comment type="PTM">
    <text evidence="3">Acetylated on Lys-6 (H4K5ac) and Lys-13 (H4K12ac) during prophase I of meiosis. Phosphorylation of H2A 'Thr-119' is a prerequisite for H4 Lys-6 acetylation but not for H4 Lys-13 acetylation. Acetylated on Lys-6 and Lys-13 by the Ada2a-containing (ATAC) histone acetyltransferase complex.</text>
</comment>
<comment type="similarity">
    <text evidence="5">Belongs to the histone H4 family.</text>
</comment>
<accession>Q76FD9</accession>
<accession>B4HEK9</accession>